<feature type="chain" id="PRO_0000082686" description="Ras protein let-60">
    <location>
        <begin position="1"/>
        <end position="181"/>
    </location>
</feature>
<feature type="propeptide" id="PRO_0000281335" description="Removed in mature form" evidence="1">
    <location>
        <begin position="182"/>
        <end position="184"/>
    </location>
</feature>
<feature type="short sequence motif" description="Effector region">
    <location>
        <begin position="32"/>
        <end position="40"/>
    </location>
</feature>
<feature type="binding site" evidence="1">
    <location>
        <begin position="10"/>
        <end position="17"/>
    </location>
    <ligand>
        <name>GTP</name>
        <dbReference type="ChEBI" id="CHEBI:37565"/>
    </ligand>
</feature>
<feature type="binding site" evidence="1">
    <location>
        <begin position="57"/>
        <end position="61"/>
    </location>
    <ligand>
        <name>GTP</name>
        <dbReference type="ChEBI" id="CHEBI:37565"/>
    </ligand>
</feature>
<feature type="binding site" evidence="1">
    <location>
        <begin position="116"/>
        <end position="119"/>
    </location>
    <ligand>
        <name>GTP</name>
        <dbReference type="ChEBI" id="CHEBI:37565"/>
    </ligand>
</feature>
<feature type="modified residue" description="Cysteine methyl ester" evidence="1">
    <location>
        <position position="181"/>
    </location>
</feature>
<feature type="lipid moiety-binding region" description="S-farnesyl cysteine" evidence="1">
    <location>
        <position position="181"/>
    </location>
</feature>
<feature type="mutagenesis site" description="In n1046; multivulva phenotype. The multivulval phenotype is enhanced in a chp-1 tm2277 mutant background. The multivula phenotype is suppressed in a rsf-1 tm5002 mutant background. RNAi-mediated knockdown of let-765 suppresses the multivulva phenotype." evidence="3 4 6 7">
    <original>G</original>
    <variation>E</variation>
    <location>
        <position position="13"/>
    </location>
</feature>
<dbReference type="EC" id="3.6.5.2" evidence="10"/>
<dbReference type="EMBL" id="M55535">
    <property type="protein sequence ID" value="AAA28103.1"/>
    <property type="status" value="ALT_INIT"/>
    <property type="molecule type" value="mRNA"/>
</dbReference>
<dbReference type="EMBL" id="BX284604">
    <property type="protein sequence ID" value="CAA92630.1"/>
    <property type="molecule type" value="Genomic_DNA"/>
</dbReference>
<dbReference type="PIR" id="A36290">
    <property type="entry name" value="A36290"/>
</dbReference>
<dbReference type="RefSeq" id="NP_502213.3">
    <property type="nucleotide sequence ID" value="NM_069812.3"/>
</dbReference>
<dbReference type="SMR" id="P22981"/>
<dbReference type="BioGRID" id="43199">
    <property type="interactions" value="142"/>
</dbReference>
<dbReference type="DIP" id="DIP-25369N"/>
<dbReference type="FunCoup" id="P22981">
    <property type="interactions" value="2405"/>
</dbReference>
<dbReference type="IntAct" id="P22981">
    <property type="interactions" value="6"/>
</dbReference>
<dbReference type="MINT" id="P22981"/>
<dbReference type="STRING" id="6239.ZK792.6.1"/>
<dbReference type="PaxDb" id="6239-ZK792.6"/>
<dbReference type="PeptideAtlas" id="P22981"/>
<dbReference type="EnsemblMetazoa" id="ZK792.6.1">
    <property type="protein sequence ID" value="ZK792.6.1"/>
    <property type="gene ID" value="WBGene00002335"/>
</dbReference>
<dbReference type="GeneID" id="178104"/>
<dbReference type="KEGG" id="cel:CELE_ZK792.6"/>
<dbReference type="UCSC" id="ZK792.6">
    <property type="organism name" value="c. elegans"/>
</dbReference>
<dbReference type="AGR" id="WB:WBGene00002335"/>
<dbReference type="CTD" id="178104"/>
<dbReference type="WormBase" id="ZK792.6">
    <property type="protein sequence ID" value="CE03827"/>
    <property type="gene ID" value="WBGene00002335"/>
    <property type="gene designation" value="let-60"/>
</dbReference>
<dbReference type="eggNOG" id="KOG0395">
    <property type="taxonomic scope" value="Eukaryota"/>
</dbReference>
<dbReference type="GeneTree" id="ENSGT00940000155653"/>
<dbReference type="HOGENOM" id="CLU_041217_9_8_1"/>
<dbReference type="InParanoid" id="P22981"/>
<dbReference type="OMA" id="HYREQIR"/>
<dbReference type="OrthoDB" id="5976022at2759"/>
<dbReference type="PhylomeDB" id="P22981"/>
<dbReference type="Reactome" id="R-CEL-1169092">
    <property type="pathway name" value="Activation of RAS in B cells"/>
</dbReference>
<dbReference type="Reactome" id="R-CEL-1433557">
    <property type="pathway name" value="Signaling by SCF-KIT"/>
</dbReference>
<dbReference type="Reactome" id="R-CEL-171007">
    <property type="pathway name" value="p38MAPK events"/>
</dbReference>
<dbReference type="Reactome" id="R-CEL-179812">
    <property type="pathway name" value="GRB2 events in EGFR signaling"/>
</dbReference>
<dbReference type="Reactome" id="R-CEL-180336">
    <property type="pathway name" value="SHC1 events in EGFR signaling"/>
</dbReference>
<dbReference type="Reactome" id="R-CEL-186763">
    <property type="pathway name" value="Downstream signal transduction"/>
</dbReference>
<dbReference type="Reactome" id="R-CEL-1963640">
    <property type="pathway name" value="GRB2 events in ERBB2 signaling"/>
</dbReference>
<dbReference type="Reactome" id="R-CEL-2179392">
    <property type="pathway name" value="EGFR Transactivation by Gastrin"/>
</dbReference>
<dbReference type="Reactome" id="R-CEL-375165">
    <property type="pathway name" value="NCAM signaling for neurite out-growth"/>
</dbReference>
<dbReference type="Reactome" id="R-CEL-3928662">
    <property type="pathway name" value="EPHB-mediated forward signaling"/>
</dbReference>
<dbReference type="Reactome" id="R-CEL-4086398">
    <property type="pathway name" value="Ca2+ pathway"/>
</dbReference>
<dbReference type="Reactome" id="R-CEL-5621575">
    <property type="pathway name" value="CD209 (DC-SIGN) signaling"/>
</dbReference>
<dbReference type="Reactome" id="R-CEL-5654688">
    <property type="pathway name" value="SHC-mediated cascade:FGFR1"/>
</dbReference>
<dbReference type="Reactome" id="R-CEL-5654693">
    <property type="pathway name" value="FRS-mediated FGFR1 signaling"/>
</dbReference>
<dbReference type="Reactome" id="R-CEL-5654699">
    <property type="pathway name" value="SHC-mediated cascade:FGFR2"/>
</dbReference>
<dbReference type="Reactome" id="R-CEL-5654700">
    <property type="pathway name" value="FRS-mediated FGFR2 signaling"/>
</dbReference>
<dbReference type="Reactome" id="R-CEL-5654704">
    <property type="pathway name" value="SHC-mediated cascade:FGFR3"/>
</dbReference>
<dbReference type="Reactome" id="R-CEL-5654706">
    <property type="pathway name" value="FRS-mediated FGFR3 signaling"/>
</dbReference>
<dbReference type="Reactome" id="R-CEL-5654712">
    <property type="pathway name" value="FRS-mediated FGFR4 signaling"/>
</dbReference>
<dbReference type="Reactome" id="R-CEL-5654719">
    <property type="pathway name" value="SHC-mediated cascade:FGFR4"/>
</dbReference>
<dbReference type="Reactome" id="R-CEL-5673000">
    <property type="pathway name" value="RAF activation"/>
</dbReference>
<dbReference type="Reactome" id="R-CEL-5673001">
    <property type="pathway name" value="RAF/MAP kinase cascade"/>
</dbReference>
<dbReference type="Reactome" id="R-CEL-5674135">
    <property type="pathway name" value="MAP2K and MAPK activation"/>
</dbReference>
<dbReference type="Reactome" id="R-CEL-5675221">
    <property type="pathway name" value="Negative regulation of MAPK pathway"/>
</dbReference>
<dbReference type="Reactome" id="R-CEL-6798695">
    <property type="pathway name" value="Neutrophil degranulation"/>
</dbReference>
<dbReference type="Reactome" id="R-CEL-8851805">
    <property type="pathway name" value="MET activates RAS signaling"/>
</dbReference>
<dbReference type="Reactome" id="R-CEL-9607240">
    <property type="pathway name" value="FLT3 Signaling"/>
</dbReference>
<dbReference type="Reactome" id="R-CEL-9634635">
    <property type="pathway name" value="Estrogen-stimulated signaling through PRKCZ"/>
</dbReference>
<dbReference type="Reactome" id="R-CEL-9648002">
    <property type="pathway name" value="RAS processing"/>
</dbReference>
<dbReference type="SignaLink" id="P22981"/>
<dbReference type="PRO" id="PR:P22981"/>
<dbReference type="Proteomes" id="UP000001940">
    <property type="component" value="Chromosome IV"/>
</dbReference>
<dbReference type="Bgee" id="WBGene00002335">
    <property type="expression patterns" value="Expressed in pharyngeal muscle cell (C elegans) and 4 other cell types or tissues"/>
</dbReference>
<dbReference type="GO" id="GO:0005938">
    <property type="term" value="C:cell cortex"/>
    <property type="evidence" value="ECO:0000314"/>
    <property type="project" value="WormBase"/>
</dbReference>
<dbReference type="GO" id="GO:0005886">
    <property type="term" value="C:plasma membrane"/>
    <property type="evidence" value="ECO:0000318"/>
    <property type="project" value="GO_Central"/>
</dbReference>
<dbReference type="GO" id="GO:0019003">
    <property type="term" value="F:GDP binding"/>
    <property type="evidence" value="ECO:0000318"/>
    <property type="project" value="GO_Central"/>
</dbReference>
<dbReference type="GO" id="GO:0005525">
    <property type="term" value="F:GTP binding"/>
    <property type="evidence" value="ECO:0000314"/>
    <property type="project" value="WormBase"/>
</dbReference>
<dbReference type="GO" id="GO:0003924">
    <property type="term" value="F:GTPase activity"/>
    <property type="evidence" value="ECO:0000250"/>
    <property type="project" value="WormBase"/>
</dbReference>
<dbReference type="GO" id="GO:0043274">
    <property type="term" value="F:phospholipase binding"/>
    <property type="evidence" value="ECO:0000353"/>
    <property type="project" value="WormBase"/>
</dbReference>
<dbReference type="GO" id="GO:0120283">
    <property type="term" value="F:protein serine/threonine kinase binding"/>
    <property type="evidence" value="ECO:0000353"/>
    <property type="project" value="WormBase"/>
</dbReference>
<dbReference type="GO" id="GO:0008306">
    <property type="term" value="P:associative learning"/>
    <property type="evidence" value="ECO:0000316"/>
    <property type="project" value="WormBase"/>
</dbReference>
<dbReference type="GO" id="GO:0007173">
    <property type="term" value="P:epidermal growth factor receptor signaling pathway"/>
    <property type="evidence" value="ECO:0000316"/>
    <property type="project" value="WormBase"/>
</dbReference>
<dbReference type="GO" id="GO:0007517">
    <property type="term" value="P:muscle organ development"/>
    <property type="evidence" value="ECO:0000315"/>
    <property type="project" value="WormBase"/>
</dbReference>
<dbReference type="GO" id="GO:0002119">
    <property type="term" value="P:nematode larval development"/>
    <property type="evidence" value="ECO:0000315"/>
    <property type="project" value="UniProtKB"/>
</dbReference>
<dbReference type="GO" id="GO:0048477">
    <property type="term" value="P:oogenesis"/>
    <property type="evidence" value="ECO:0000316"/>
    <property type="project" value="WormBase"/>
</dbReference>
<dbReference type="GO" id="GO:1902685">
    <property type="term" value="P:positive regulation of receptor localization to synapse"/>
    <property type="evidence" value="ECO:0000315"/>
    <property type="project" value="WormBase"/>
</dbReference>
<dbReference type="GO" id="GO:0040026">
    <property type="term" value="P:positive regulation of vulval development"/>
    <property type="evidence" value="ECO:0000315"/>
    <property type="project" value="WormBase"/>
</dbReference>
<dbReference type="GO" id="GO:0007265">
    <property type="term" value="P:Ras protein signal transduction"/>
    <property type="evidence" value="ECO:0000318"/>
    <property type="project" value="GO_Central"/>
</dbReference>
<dbReference type="GO" id="GO:0042659">
    <property type="term" value="P:regulation of cell fate specification"/>
    <property type="evidence" value="ECO:0000315"/>
    <property type="project" value="WormBase"/>
</dbReference>
<dbReference type="GO" id="GO:0031344">
    <property type="term" value="P:regulation of cell projection organization"/>
    <property type="evidence" value="ECO:0000315"/>
    <property type="project" value="WormBase"/>
</dbReference>
<dbReference type="GO" id="GO:0040028">
    <property type="term" value="P:regulation of vulval development"/>
    <property type="evidence" value="ECO:0000316"/>
    <property type="project" value="UniProtKB"/>
</dbReference>
<dbReference type="GO" id="GO:0022414">
    <property type="term" value="P:reproductive process"/>
    <property type="evidence" value="ECO:0000316"/>
    <property type="project" value="WormBase"/>
</dbReference>
<dbReference type="GO" id="GO:0007614">
    <property type="term" value="P:short-term memory"/>
    <property type="evidence" value="ECO:0000316"/>
    <property type="project" value="WormBase"/>
</dbReference>
<dbReference type="GO" id="GO:0072327">
    <property type="term" value="P:vulval cell fate specification"/>
    <property type="evidence" value="ECO:0000315"/>
    <property type="project" value="UniProtKB"/>
</dbReference>
<dbReference type="CDD" id="cd04138">
    <property type="entry name" value="H_N_K_Ras_like"/>
    <property type="match status" value="1"/>
</dbReference>
<dbReference type="FunFam" id="3.40.50.300:FF:000096">
    <property type="entry name" value="KRAS proto-oncogene, GTPase"/>
    <property type="match status" value="1"/>
</dbReference>
<dbReference type="Gene3D" id="3.40.50.300">
    <property type="entry name" value="P-loop containing nucleotide triphosphate hydrolases"/>
    <property type="match status" value="1"/>
</dbReference>
<dbReference type="InterPro" id="IPR027417">
    <property type="entry name" value="P-loop_NTPase"/>
</dbReference>
<dbReference type="InterPro" id="IPR005225">
    <property type="entry name" value="Small_GTP-bd"/>
</dbReference>
<dbReference type="InterPro" id="IPR001806">
    <property type="entry name" value="Small_GTPase"/>
</dbReference>
<dbReference type="InterPro" id="IPR020849">
    <property type="entry name" value="Small_GTPase_Ras-type"/>
</dbReference>
<dbReference type="NCBIfam" id="TIGR00231">
    <property type="entry name" value="small_GTP"/>
    <property type="match status" value="1"/>
</dbReference>
<dbReference type="PANTHER" id="PTHR24070">
    <property type="entry name" value="RAS, DI-RAS, AND RHEB FAMILY MEMBERS OF SMALL GTPASE SUPERFAMILY"/>
    <property type="match status" value="1"/>
</dbReference>
<dbReference type="Pfam" id="PF00071">
    <property type="entry name" value="Ras"/>
    <property type="match status" value="1"/>
</dbReference>
<dbReference type="PRINTS" id="PR00449">
    <property type="entry name" value="RASTRNSFRMNG"/>
</dbReference>
<dbReference type="SMART" id="SM00175">
    <property type="entry name" value="RAB"/>
    <property type="match status" value="1"/>
</dbReference>
<dbReference type="SMART" id="SM00176">
    <property type="entry name" value="RAN"/>
    <property type="match status" value="1"/>
</dbReference>
<dbReference type="SMART" id="SM00173">
    <property type="entry name" value="RAS"/>
    <property type="match status" value="1"/>
</dbReference>
<dbReference type="SMART" id="SM00174">
    <property type="entry name" value="RHO"/>
    <property type="match status" value="1"/>
</dbReference>
<dbReference type="SUPFAM" id="SSF52540">
    <property type="entry name" value="P-loop containing nucleoside triphosphate hydrolases"/>
    <property type="match status" value="1"/>
</dbReference>
<dbReference type="PROSITE" id="PS51421">
    <property type="entry name" value="RAS"/>
    <property type="match status" value="1"/>
</dbReference>
<keyword id="KW-1003">Cell membrane</keyword>
<keyword id="KW-0342">GTP-binding</keyword>
<keyword id="KW-0378">Hydrolase</keyword>
<keyword id="KW-0449">Lipoprotein</keyword>
<keyword id="KW-0472">Membrane</keyword>
<keyword id="KW-0488">Methylation</keyword>
<keyword id="KW-0547">Nucleotide-binding</keyword>
<keyword id="KW-0636">Prenylation</keyword>
<keyword id="KW-1185">Reference proteome</keyword>
<comment type="function">
    <text evidence="2 3 4 5 6 7 8 9 10">GTP-binding protein with GTPase activity (PubMed:39809765). The level of let-60 controls the switch between vulval and hypodermal cell fates during C.elegans vulval induction (PubMed:20230814, PubMed:2123303, PubMed:2257629, PubMed:23103556, PubMed:24929033, PubMed:28135265, PubMed:32053105). May stimulate the guanine nucleotide exchange factor (GEF) activity of rap-1 (PubMed:10608844). May induce nuclear condensation (PubMed:23103556).</text>
</comment>
<comment type="catalytic activity">
    <reaction evidence="10">
        <text>GTP + H2O = GDP + phosphate + H(+)</text>
        <dbReference type="Rhea" id="RHEA:19669"/>
        <dbReference type="ChEBI" id="CHEBI:15377"/>
        <dbReference type="ChEBI" id="CHEBI:15378"/>
        <dbReference type="ChEBI" id="CHEBI:37565"/>
        <dbReference type="ChEBI" id="CHEBI:43474"/>
        <dbReference type="ChEBI" id="CHEBI:58189"/>
        <dbReference type="EC" id="3.6.5.2"/>
    </reaction>
</comment>
<comment type="subunit">
    <text evidence="11 12">Interacts with soc-2 (PubMed:9674433). Interacts (in GTP-bound form) with plc-1 (via Ras-associating domain 1) (PubMed:9497345).</text>
</comment>
<comment type="subcellular location">
    <subcellularLocation>
        <location>Cell membrane</location>
        <topology>Lipid-anchor</topology>
    </subcellularLocation>
</comment>
<comment type="tissue specificity">
    <text evidence="7">Expressed in body wall muscles and in the nervous system including ganglion, nerve ring dorsal and ventral nerve cords, motor neurons and sensory tail neurons.</text>
</comment>
<comment type="similarity">
    <text evidence="13">Belongs to the small GTPase superfamily. Ras family.</text>
</comment>
<comment type="sequence caution" evidence="13">
    <conflict type="erroneous initiation">
        <sequence resource="EMBL-CDS" id="AAA28103"/>
    </conflict>
    <text>Extended N-terminus.</text>
</comment>
<organism>
    <name type="scientific">Caenorhabditis elegans</name>
    <dbReference type="NCBI Taxonomy" id="6239"/>
    <lineage>
        <taxon>Eukaryota</taxon>
        <taxon>Metazoa</taxon>
        <taxon>Ecdysozoa</taxon>
        <taxon>Nematoda</taxon>
        <taxon>Chromadorea</taxon>
        <taxon>Rhabditida</taxon>
        <taxon>Rhabditina</taxon>
        <taxon>Rhabditomorpha</taxon>
        <taxon>Rhabditoidea</taxon>
        <taxon>Rhabditidae</taxon>
        <taxon>Peloderinae</taxon>
        <taxon>Caenorhabditis</taxon>
    </lineage>
</organism>
<proteinExistence type="evidence at protein level"/>
<evidence type="ECO:0000250" key="1"/>
<evidence type="ECO:0000269" key="2">
    <source>
    </source>
</evidence>
<evidence type="ECO:0000269" key="3">
    <source>
    </source>
</evidence>
<evidence type="ECO:0000269" key="4">
    <source>
    </source>
</evidence>
<evidence type="ECO:0000269" key="5">
    <source>
    </source>
</evidence>
<evidence type="ECO:0000269" key="6">
    <source>
    </source>
</evidence>
<evidence type="ECO:0000269" key="7">
    <source>
    </source>
</evidence>
<evidence type="ECO:0000269" key="8">
    <source>
    </source>
</evidence>
<evidence type="ECO:0000269" key="9">
    <source>
    </source>
</evidence>
<evidence type="ECO:0000269" key="10">
    <source>
    </source>
</evidence>
<evidence type="ECO:0000269" key="11">
    <source>
    </source>
</evidence>
<evidence type="ECO:0000269" key="12">
    <source>
    </source>
</evidence>
<evidence type="ECO:0000305" key="13"/>
<evidence type="ECO:0000312" key="14">
    <source>
        <dbReference type="WormBase" id="ZK792.6"/>
    </source>
</evidence>
<protein>
    <recommendedName>
        <fullName>Ras protein let-60</fullName>
        <ecNumber evidence="10">3.6.5.2</ecNumber>
    </recommendedName>
    <alternativeName>
        <fullName>Abnormal cell lineage protein 34</fullName>
    </alternativeName>
    <alternativeName>
        <fullName>Lethal protein 60</fullName>
    </alternativeName>
</protein>
<reference key="1">
    <citation type="journal article" date="1990" name="Cell">
        <title>let-60, a gene that specifies cell fates during C. elegans vulval induction, encodes a ras protein.</title>
        <authorList>
            <person name="Han M."/>
            <person name="Sternberg P.W."/>
        </authorList>
    </citation>
    <scope>NUCLEOTIDE SEQUENCE [MRNA]</scope>
    <scope>FUNCTION</scope>
    <source>
        <strain>Bristol N2</strain>
    </source>
</reference>
<reference key="2">
    <citation type="journal article" date="1998" name="Science">
        <title>Genome sequence of the nematode C. elegans: a platform for investigating biology.</title>
        <authorList>
            <consortium name="The C. elegans sequencing consortium"/>
        </authorList>
    </citation>
    <scope>NUCLEOTIDE SEQUENCE [LARGE SCALE GENOMIC DNA]</scope>
    <source>
        <strain>Bristol N2</strain>
    </source>
</reference>
<reference key="3">
    <citation type="journal article" date="1990" name="Nature">
        <title>Caenorhabditis elegans ras gene let-60 acts as a switch in the pathway of vulval induction.</title>
        <authorList>
            <person name="Beitel G.J."/>
            <person name="Clark S.C."/>
            <person name="Horvitz H.R."/>
        </authorList>
    </citation>
    <scope>FUNCTION</scope>
    <scope>MUTAGENESIS OF GLY-13</scope>
</reference>
<reference key="4">
    <citation type="journal article" date="1998" name="Cell">
        <title>SUR-8, a conserved Ras-binding protein with leucine-rich repeats, positively regulates Ras-mediated signaling in C. elegans.</title>
        <authorList>
            <person name="Sieburth D.S."/>
            <person name="Sun Q."/>
            <person name="Han M."/>
        </authorList>
    </citation>
    <scope>INTERACTION WITH SOC-2</scope>
</reference>
<reference key="5">
    <citation type="journal article" date="1998" name="J. Biol. Chem.">
        <title>Identification of PLC210, a Caenorhabditis elegans phospholipase C, as a putative effector of Ras.</title>
        <authorList>
            <person name="Shibatohge M."/>
            <person name="Kariya K."/>
            <person name="Liao Y."/>
            <person name="Hu C.-D."/>
            <person name="Watari Y."/>
            <person name="Goshima M."/>
            <person name="Shima F."/>
            <person name="Kataoka T."/>
        </authorList>
    </citation>
    <scope>INTERACTION WITH PLC-1</scope>
</reference>
<reference key="6">
    <citation type="journal article" date="1999" name="J. Biol. Chem.">
        <title>RA-GEF, a novel Rap1A guanine nucleotide exchange factor containing a Ras/Rap1A-associating domain, is conserved between nematode and humans.</title>
        <authorList>
            <person name="Liao Y."/>
            <person name="Kariya K."/>
            <person name="Hu C.-D."/>
            <person name="Shibatohge M."/>
            <person name="Goshima M."/>
            <person name="Okada T."/>
            <person name="Watari Y."/>
            <person name="Gao X."/>
            <person name="Jin T.-G."/>
            <person name="Yamawaki-Kataoka Y."/>
            <person name="Kataoka T."/>
        </authorList>
    </citation>
    <scope>POSSIBLE FUNCTION IN GEF ACTIVITY</scope>
</reference>
<reference key="7">
    <citation type="journal article" date="2010" name="Dev. Biol.">
        <title>A strawberry notch homolog, let-765/nsh-1, positively regulates lin-3/egf expression to promote RAS-dependent vulval induction in C. elegans.</title>
        <authorList>
            <person name="Simms C.L."/>
            <person name="Baillie D.L."/>
        </authorList>
    </citation>
    <scope>FUNCTION</scope>
    <scope>MUTAGENESIS OF GLY-13</scope>
</reference>
<reference key="8">
    <citation type="journal article" date="2013" name="Exp. Cell Res.">
        <title>Characterization of RSF-1, the Caenorhabditis elegans homolog of the Ras-association domain family protein 1.</title>
        <authorList>
            <person name="Iwasa H."/>
            <person name="Kuroyanagi H."/>
            <person name="Maimaiti S."/>
            <person name="Ikeda M."/>
            <person name="Nakagawa K."/>
            <person name="Hata Y."/>
        </authorList>
    </citation>
    <scope>FUNCTION</scope>
    <scope>MUTAGENESIS OF GLY-13</scope>
</reference>
<reference key="9">
    <citation type="journal article" date="2014" name="Gene Expr. Patterns">
        <title>Expression pattern and first functional characterization of riok-1 in Caenorhabditis elegans.</title>
        <authorList>
            <person name="Weinberg F."/>
            <person name="Schulze E."/>
            <person name="Fatouros C."/>
            <person name="Schmidt E."/>
            <person name="Baumeister R."/>
            <person name="Brummer T."/>
        </authorList>
    </citation>
    <scope>FUNCTION</scope>
    <scope>TISSUE SPECIFICITY</scope>
    <scope>MUTAGENESIS OF GLY-13</scope>
</reference>
<reference key="10">
    <citation type="journal article" date="2017" name="PLoS Genet.">
        <title>beta-Integrin de-phosphorylation by the density-enhanced phosphatase DEP-1 attenuates EGFR signaling in C. elegans.</title>
        <authorList>
            <person name="Walser M."/>
            <person name="Umbricht C.A."/>
            <person name="Froehli E."/>
            <person name="Nanni P."/>
            <person name="Hajnal A."/>
        </authorList>
    </citation>
    <scope>FUNCTION</scope>
</reference>
<reference key="11">
    <citation type="journal article" date="2020" name="Elife">
        <title>The CHORD protein CHP-1 regulates EGF receptor trafficking and signaling in C. elegans and in human cells.</title>
        <authorList>
            <person name="Haag A."/>
            <person name="Walser M."/>
            <person name="Henggeler A."/>
            <person name="Hajnal A."/>
        </authorList>
    </citation>
    <scope>FUNCTION</scope>
    <scope>MUTAGENESIS OF GLY-13</scope>
</reference>
<reference key="12">
    <citation type="journal article" date="2025" name="Nat. Commun.">
        <title>The small GTPase MRAS is a broken switch.</title>
        <authorList>
            <person name="Bernal Astrain G."/>
            <person name="Strakhova R."/>
            <person name="Jo C.H."/>
            <person name="Teszner E."/>
            <person name="Killoran R.C."/>
            <person name="Smith M.J."/>
        </authorList>
    </citation>
    <scope>FUNCTION</scope>
    <scope>CATALYTIC ACTIVITY</scope>
</reference>
<gene>
    <name evidence="14" type="primary">let-60</name>
    <name evidence="14" type="synonym">lin-34</name>
    <name evidence="14" type="ORF">ZK792.6</name>
</gene>
<name>LET60_CAEEL</name>
<accession>P22981</accession>
<sequence length="184" mass="20983">MTEYKLVVVGDGGVGKSALTIQLIQNHFVEEYDPTIEDSYRKQVVIDGETCLLDILDTAGQEEYSAMRDQYMRTGEGFLLVFAVNEAKSFENVANYREQIRRVKDSDDVPMVLVGNKCDLSSRSVDFRTVSETAKGYGIPNVDTSAKTRMGVDEAFYTLVREIRKHRERHDNNKPQKKKKCQIM</sequence>